<dbReference type="EMBL" id="AM286415">
    <property type="protein sequence ID" value="CAL10563.1"/>
    <property type="molecule type" value="Genomic_DNA"/>
</dbReference>
<dbReference type="RefSeq" id="WP_005156269.1">
    <property type="nucleotide sequence ID" value="NC_008800.1"/>
</dbReference>
<dbReference type="RefSeq" id="YP_001004807.1">
    <property type="nucleotide sequence ID" value="NC_008800.1"/>
</dbReference>
<dbReference type="SMR" id="A1JIX2"/>
<dbReference type="GeneID" id="93968918"/>
<dbReference type="KEGG" id="yen:YE0437"/>
<dbReference type="PATRIC" id="fig|393305.7.peg.533"/>
<dbReference type="eggNOG" id="COG0184">
    <property type="taxonomic scope" value="Bacteria"/>
</dbReference>
<dbReference type="HOGENOM" id="CLU_148518_0_0_6"/>
<dbReference type="OrthoDB" id="9799262at2"/>
<dbReference type="Proteomes" id="UP000000642">
    <property type="component" value="Chromosome"/>
</dbReference>
<dbReference type="GO" id="GO:0022627">
    <property type="term" value="C:cytosolic small ribosomal subunit"/>
    <property type="evidence" value="ECO:0007669"/>
    <property type="project" value="TreeGrafter"/>
</dbReference>
<dbReference type="GO" id="GO:0019843">
    <property type="term" value="F:rRNA binding"/>
    <property type="evidence" value="ECO:0007669"/>
    <property type="project" value="UniProtKB-UniRule"/>
</dbReference>
<dbReference type="GO" id="GO:0003735">
    <property type="term" value="F:structural constituent of ribosome"/>
    <property type="evidence" value="ECO:0007669"/>
    <property type="project" value="InterPro"/>
</dbReference>
<dbReference type="GO" id="GO:0006412">
    <property type="term" value="P:translation"/>
    <property type="evidence" value="ECO:0007669"/>
    <property type="project" value="UniProtKB-UniRule"/>
</dbReference>
<dbReference type="CDD" id="cd00353">
    <property type="entry name" value="Ribosomal_S15p_S13e"/>
    <property type="match status" value="1"/>
</dbReference>
<dbReference type="FunFam" id="1.10.287.10:FF:000002">
    <property type="entry name" value="30S ribosomal protein S15"/>
    <property type="match status" value="1"/>
</dbReference>
<dbReference type="Gene3D" id="6.10.250.3130">
    <property type="match status" value="1"/>
</dbReference>
<dbReference type="Gene3D" id="1.10.287.10">
    <property type="entry name" value="S15/NS1, RNA-binding"/>
    <property type="match status" value="1"/>
</dbReference>
<dbReference type="HAMAP" id="MF_01343_B">
    <property type="entry name" value="Ribosomal_uS15_B"/>
    <property type="match status" value="1"/>
</dbReference>
<dbReference type="InterPro" id="IPR000589">
    <property type="entry name" value="Ribosomal_uS15"/>
</dbReference>
<dbReference type="InterPro" id="IPR005290">
    <property type="entry name" value="Ribosomal_uS15_bac-type"/>
</dbReference>
<dbReference type="InterPro" id="IPR009068">
    <property type="entry name" value="uS15_NS1_RNA-bd_sf"/>
</dbReference>
<dbReference type="NCBIfam" id="TIGR00952">
    <property type="entry name" value="S15_bact"/>
    <property type="match status" value="1"/>
</dbReference>
<dbReference type="PANTHER" id="PTHR23321">
    <property type="entry name" value="RIBOSOMAL PROTEIN S15, BACTERIAL AND ORGANELLAR"/>
    <property type="match status" value="1"/>
</dbReference>
<dbReference type="PANTHER" id="PTHR23321:SF26">
    <property type="entry name" value="SMALL RIBOSOMAL SUBUNIT PROTEIN US15M"/>
    <property type="match status" value="1"/>
</dbReference>
<dbReference type="Pfam" id="PF00312">
    <property type="entry name" value="Ribosomal_S15"/>
    <property type="match status" value="1"/>
</dbReference>
<dbReference type="SMART" id="SM01387">
    <property type="entry name" value="Ribosomal_S15"/>
    <property type="match status" value="1"/>
</dbReference>
<dbReference type="SUPFAM" id="SSF47060">
    <property type="entry name" value="S15/NS1 RNA-binding domain"/>
    <property type="match status" value="1"/>
</dbReference>
<dbReference type="PROSITE" id="PS00362">
    <property type="entry name" value="RIBOSOMAL_S15"/>
    <property type="match status" value="1"/>
</dbReference>
<keyword id="KW-0687">Ribonucleoprotein</keyword>
<keyword id="KW-0689">Ribosomal protein</keyword>
<keyword id="KW-0694">RNA-binding</keyword>
<keyword id="KW-0699">rRNA-binding</keyword>
<accession>A1JIX2</accession>
<protein>
    <recommendedName>
        <fullName evidence="1">Small ribosomal subunit protein uS15</fullName>
    </recommendedName>
    <alternativeName>
        <fullName evidence="2">30S ribosomal protein S15</fullName>
    </alternativeName>
</protein>
<evidence type="ECO:0000255" key="1">
    <source>
        <dbReference type="HAMAP-Rule" id="MF_01343"/>
    </source>
</evidence>
<evidence type="ECO:0000305" key="2"/>
<reference key="1">
    <citation type="journal article" date="2006" name="PLoS Genet.">
        <title>The complete genome sequence and comparative genome analysis of the high pathogenicity Yersinia enterocolitica strain 8081.</title>
        <authorList>
            <person name="Thomson N.R."/>
            <person name="Howard S."/>
            <person name="Wren B.W."/>
            <person name="Holden M.T.G."/>
            <person name="Crossman L."/>
            <person name="Challis G.L."/>
            <person name="Churcher C."/>
            <person name="Mungall K."/>
            <person name="Brooks K."/>
            <person name="Chillingworth T."/>
            <person name="Feltwell T."/>
            <person name="Abdellah Z."/>
            <person name="Hauser H."/>
            <person name="Jagels K."/>
            <person name="Maddison M."/>
            <person name="Moule S."/>
            <person name="Sanders M."/>
            <person name="Whitehead S."/>
            <person name="Quail M.A."/>
            <person name="Dougan G."/>
            <person name="Parkhill J."/>
            <person name="Prentice M.B."/>
        </authorList>
    </citation>
    <scope>NUCLEOTIDE SEQUENCE [LARGE SCALE GENOMIC DNA]</scope>
    <source>
        <strain>NCTC 13174 / 8081</strain>
    </source>
</reference>
<organism>
    <name type="scientific">Yersinia enterocolitica serotype O:8 / biotype 1B (strain NCTC 13174 / 8081)</name>
    <dbReference type="NCBI Taxonomy" id="393305"/>
    <lineage>
        <taxon>Bacteria</taxon>
        <taxon>Pseudomonadati</taxon>
        <taxon>Pseudomonadota</taxon>
        <taxon>Gammaproteobacteria</taxon>
        <taxon>Enterobacterales</taxon>
        <taxon>Yersiniaceae</taxon>
        <taxon>Yersinia</taxon>
    </lineage>
</organism>
<proteinExistence type="inferred from homology"/>
<feature type="chain" id="PRO_1000054894" description="Small ribosomal subunit protein uS15">
    <location>
        <begin position="1"/>
        <end position="89"/>
    </location>
</feature>
<name>RS15_YERE8</name>
<sequence>MSLSVEAKAKIVADFGRDANDTGSSEVQVALLTAQINHLQGHFSEHKKDHHSRRGLLRMVSTRRKLLDYLKRKDVASYVSLIERLGLRR</sequence>
<gene>
    <name evidence="1" type="primary">rpsO</name>
    <name type="ordered locus">YE0437</name>
</gene>
<comment type="function">
    <text evidence="1">One of the primary rRNA binding proteins, it binds directly to 16S rRNA where it helps nucleate assembly of the platform of the 30S subunit by binding and bridging several RNA helices of the 16S rRNA.</text>
</comment>
<comment type="function">
    <text evidence="1">Forms an intersubunit bridge (bridge B4) with the 23S rRNA of the 50S subunit in the ribosome.</text>
</comment>
<comment type="subunit">
    <text evidence="1">Part of the 30S ribosomal subunit. Forms a bridge to the 50S subunit in the 70S ribosome, contacting the 23S rRNA.</text>
</comment>
<comment type="similarity">
    <text evidence="1">Belongs to the universal ribosomal protein uS15 family.</text>
</comment>